<protein>
    <recommendedName>
        <fullName evidence="1">ATP-dependent protease ATPase subunit HslU</fullName>
    </recommendedName>
    <alternativeName>
        <fullName evidence="1">Heat shock protein HslU</fullName>
    </alternativeName>
    <alternativeName>
        <fullName evidence="1">Unfoldase HslU</fullName>
    </alternativeName>
</protein>
<proteinExistence type="inferred from homology"/>
<comment type="function">
    <text evidence="1">ATPase subunit of a proteasome-like degradation complex; this subunit has chaperone activity. The binding of ATP and its subsequent hydrolysis by HslU are essential for unfolding of protein substrates subsequently hydrolyzed by HslV. HslU recognizes the N-terminal part of its protein substrates and unfolds these before they are guided to HslV for hydrolysis.</text>
</comment>
<comment type="subunit">
    <text evidence="1">A double ring-shaped homohexamer of HslV is capped on each side by a ring-shaped HslU homohexamer. The assembly of the HslU/HslV complex is dependent on binding of ATP.</text>
</comment>
<comment type="subcellular location">
    <subcellularLocation>
        <location evidence="1">Cytoplasm</location>
    </subcellularLocation>
</comment>
<comment type="induction">
    <text evidence="1">By heat shock.</text>
</comment>
<comment type="similarity">
    <text evidence="1">Belongs to the ClpX chaperone family. HslU subfamily.</text>
</comment>
<accession>Q3YV47</accession>
<feature type="chain" id="PRO_1000012813" description="ATP-dependent protease ATPase subunit HslU">
    <location>
        <begin position="1"/>
        <end position="443"/>
    </location>
</feature>
<feature type="binding site" evidence="1">
    <location>
        <position position="18"/>
    </location>
    <ligand>
        <name>ATP</name>
        <dbReference type="ChEBI" id="CHEBI:30616"/>
    </ligand>
</feature>
<feature type="binding site" evidence="1">
    <location>
        <begin position="60"/>
        <end position="65"/>
    </location>
    <ligand>
        <name>ATP</name>
        <dbReference type="ChEBI" id="CHEBI:30616"/>
    </ligand>
</feature>
<feature type="binding site" evidence="1">
    <location>
        <position position="256"/>
    </location>
    <ligand>
        <name>ATP</name>
        <dbReference type="ChEBI" id="CHEBI:30616"/>
    </ligand>
</feature>
<feature type="binding site" evidence="1">
    <location>
        <position position="321"/>
    </location>
    <ligand>
        <name>ATP</name>
        <dbReference type="ChEBI" id="CHEBI:30616"/>
    </ligand>
</feature>
<feature type="binding site" evidence="1">
    <location>
        <position position="393"/>
    </location>
    <ligand>
        <name>ATP</name>
        <dbReference type="ChEBI" id="CHEBI:30616"/>
    </ligand>
</feature>
<organism>
    <name type="scientific">Shigella sonnei (strain Ss046)</name>
    <dbReference type="NCBI Taxonomy" id="300269"/>
    <lineage>
        <taxon>Bacteria</taxon>
        <taxon>Pseudomonadati</taxon>
        <taxon>Pseudomonadota</taxon>
        <taxon>Gammaproteobacteria</taxon>
        <taxon>Enterobacterales</taxon>
        <taxon>Enterobacteriaceae</taxon>
        <taxon>Shigella</taxon>
    </lineage>
</organism>
<reference key="1">
    <citation type="journal article" date="2005" name="Nucleic Acids Res.">
        <title>Genome dynamics and diversity of Shigella species, the etiologic agents of bacillary dysentery.</title>
        <authorList>
            <person name="Yang F."/>
            <person name="Yang J."/>
            <person name="Zhang X."/>
            <person name="Chen L."/>
            <person name="Jiang Y."/>
            <person name="Yan Y."/>
            <person name="Tang X."/>
            <person name="Wang J."/>
            <person name="Xiong Z."/>
            <person name="Dong J."/>
            <person name="Xue Y."/>
            <person name="Zhu Y."/>
            <person name="Xu X."/>
            <person name="Sun L."/>
            <person name="Chen S."/>
            <person name="Nie H."/>
            <person name="Peng J."/>
            <person name="Xu J."/>
            <person name="Wang Y."/>
            <person name="Yuan Z."/>
            <person name="Wen Y."/>
            <person name="Yao Z."/>
            <person name="Shen Y."/>
            <person name="Qiang B."/>
            <person name="Hou Y."/>
            <person name="Yu J."/>
            <person name="Jin Q."/>
        </authorList>
    </citation>
    <scope>NUCLEOTIDE SEQUENCE [LARGE SCALE GENOMIC DNA]</scope>
    <source>
        <strain>Ss046</strain>
    </source>
</reference>
<dbReference type="EMBL" id="CP000038">
    <property type="protein sequence ID" value="AAZ90615.1"/>
    <property type="molecule type" value="Genomic_DNA"/>
</dbReference>
<dbReference type="RefSeq" id="WP_001293341.1">
    <property type="nucleotide sequence ID" value="NC_007384.1"/>
</dbReference>
<dbReference type="SMR" id="Q3YV47"/>
<dbReference type="GeneID" id="93777967"/>
<dbReference type="KEGG" id="ssn:SSON_4100"/>
<dbReference type="HOGENOM" id="CLU_033123_0_0_6"/>
<dbReference type="Proteomes" id="UP000002529">
    <property type="component" value="Chromosome"/>
</dbReference>
<dbReference type="GO" id="GO:0009376">
    <property type="term" value="C:HslUV protease complex"/>
    <property type="evidence" value="ECO:0007669"/>
    <property type="project" value="UniProtKB-UniRule"/>
</dbReference>
<dbReference type="GO" id="GO:0005524">
    <property type="term" value="F:ATP binding"/>
    <property type="evidence" value="ECO:0007669"/>
    <property type="project" value="UniProtKB-UniRule"/>
</dbReference>
<dbReference type="GO" id="GO:0016887">
    <property type="term" value="F:ATP hydrolysis activity"/>
    <property type="evidence" value="ECO:0007669"/>
    <property type="project" value="InterPro"/>
</dbReference>
<dbReference type="GO" id="GO:0008233">
    <property type="term" value="F:peptidase activity"/>
    <property type="evidence" value="ECO:0007669"/>
    <property type="project" value="InterPro"/>
</dbReference>
<dbReference type="GO" id="GO:0036402">
    <property type="term" value="F:proteasome-activating activity"/>
    <property type="evidence" value="ECO:0007669"/>
    <property type="project" value="UniProtKB-UniRule"/>
</dbReference>
<dbReference type="GO" id="GO:0043335">
    <property type="term" value="P:protein unfolding"/>
    <property type="evidence" value="ECO:0007669"/>
    <property type="project" value="UniProtKB-UniRule"/>
</dbReference>
<dbReference type="GO" id="GO:0051603">
    <property type="term" value="P:proteolysis involved in protein catabolic process"/>
    <property type="evidence" value="ECO:0007669"/>
    <property type="project" value="TreeGrafter"/>
</dbReference>
<dbReference type="CDD" id="cd19498">
    <property type="entry name" value="RecA-like_HslU"/>
    <property type="match status" value="1"/>
</dbReference>
<dbReference type="FunFam" id="1.10.8.10:FF:000012">
    <property type="entry name" value="ATP-dependent protease ATPase subunit HslU"/>
    <property type="match status" value="1"/>
</dbReference>
<dbReference type="FunFam" id="1.10.8.10:FF:000028">
    <property type="entry name" value="ATP-dependent protease ATPase subunit HslU"/>
    <property type="match status" value="1"/>
</dbReference>
<dbReference type="FunFam" id="1.10.8.60:FF:000027">
    <property type="entry name" value="ATP-dependent protease ATPase subunit HslU"/>
    <property type="match status" value="1"/>
</dbReference>
<dbReference type="FunFam" id="3.40.50.300:FF:000213">
    <property type="entry name" value="ATP-dependent protease ATPase subunit HslU"/>
    <property type="match status" value="1"/>
</dbReference>
<dbReference type="FunFam" id="3.40.50.300:FF:000220">
    <property type="entry name" value="ATP-dependent protease ATPase subunit HslU"/>
    <property type="match status" value="1"/>
</dbReference>
<dbReference type="Gene3D" id="1.10.8.60">
    <property type="match status" value="1"/>
</dbReference>
<dbReference type="Gene3D" id="1.10.8.10">
    <property type="entry name" value="DNA helicase RuvA subunit, C-terminal domain"/>
    <property type="match status" value="2"/>
</dbReference>
<dbReference type="Gene3D" id="3.40.50.300">
    <property type="entry name" value="P-loop containing nucleotide triphosphate hydrolases"/>
    <property type="match status" value="1"/>
</dbReference>
<dbReference type="HAMAP" id="MF_00249">
    <property type="entry name" value="HslU"/>
    <property type="match status" value="1"/>
</dbReference>
<dbReference type="InterPro" id="IPR003593">
    <property type="entry name" value="AAA+_ATPase"/>
</dbReference>
<dbReference type="InterPro" id="IPR050052">
    <property type="entry name" value="ATP-dep_Clp_protease_ClpX"/>
</dbReference>
<dbReference type="InterPro" id="IPR003959">
    <property type="entry name" value="ATPase_AAA_core"/>
</dbReference>
<dbReference type="InterPro" id="IPR019489">
    <property type="entry name" value="Clp_ATPase_C"/>
</dbReference>
<dbReference type="InterPro" id="IPR004491">
    <property type="entry name" value="HslU"/>
</dbReference>
<dbReference type="InterPro" id="IPR027417">
    <property type="entry name" value="P-loop_NTPase"/>
</dbReference>
<dbReference type="NCBIfam" id="TIGR00390">
    <property type="entry name" value="hslU"/>
    <property type="match status" value="1"/>
</dbReference>
<dbReference type="NCBIfam" id="NF003544">
    <property type="entry name" value="PRK05201.1"/>
    <property type="match status" value="1"/>
</dbReference>
<dbReference type="PANTHER" id="PTHR48102">
    <property type="entry name" value="ATP-DEPENDENT CLP PROTEASE ATP-BINDING SUBUNIT CLPX-LIKE, MITOCHONDRIAL-RELATED"/>
    <property type="match status" value="1"/>
</dbReference>
<dbReference type="PANTHER" id="PTHR48102:SF3">
    <property type="entry name" value="ATP-DEPENDENT PROTEASE ATPASE SUBUNIT HSLU"/>
    <property type="match status" value="1"/>
</dbReference>
<dbReference type="Pfam" id="PF00004">
    <property type="entry name" value="AAA"/>
    <property type="match status" value="1"/>
</dbReference>
<dbReference type="Pfam" id="PF07724">
    <property type="entry name" value="AAA_2"/>
    <property type="match status" value="1"/>
</dbReference>
<dbReference type="SMART" id="SM00382">
    <property type="entry name" value="AAA"/>
    <property type="match status" value="1"/>
</dbReference>
<dbReference type="SMART" id="SM01086">
    <property type="entry name" value="ClpB_D2-small"/>
    <property type="match status" value="1"/>
</dbReference>
<dbReference type="SUPFAM" id="SSF52540">
    <property type="entry name" value="P-loop containing nucleoside triphosphate hydrolases"/>
    <property type="match status" value="1"/>
</dbReference>
<name>HSLU_SHISS</name>
<gene>
    <name evidence="1" type="primary">hslU</name>
    <name type="ordered locus">SSON_4100</name>
</gene>
<evidence type="ECO:0000255" key="1">
    <source>
        <dbReference type="HAMAP-Rule" id="MF_00249"/>
    </source>
</evidence>
<keyword id="KW-0067">ATP-binding</keyword>
<keyword id="KW-0143">Chaperone</keyword>
<keyword id="KW-0963">Cytoplasm</keyword>
<keyword id="KW-0547">Nucleotide-binding</keyword>
<keyword id="KW-1185">Reference proteome</keyword>
<keyword id="KW-0346">Stress response</keyword>
<sequence length="443" mass="49594">MSEMTPREIVSELDKHIIGQDNAKRSVAIALRNRWRRMQLNEELRHEVTPKNILMIGPTGVGKTEIARRLAKLANAPFIKVEATKFTEVGYVGKEVDSIIRDLTDAAVKMVRVQAIEKNRYRAEELAEERILDVLIPPAKNNWGQTEQQQEPSAARQAFRKKLREGQLDDKEIEIDLAAAPMGVEIMAPPGMEEMTSQLQSMFQNLGGQKQKARKLKIKDAMKLLIEEEAAKLVNPEELKQDAIDAVEQHGIVFIDEIDKICKRGESSGPDVSREGVQRDLLPLVEGCTVSTKHGMVKTDHILFIASGAFQIAKPSDLIPELQGRLPIRVELQALTTSDFERILTEPNASITVQYKALMATEGVNIEFTDSGIKRIAEAAWQVNESTENIGARRLHTVLERLMEEISYDASDLSGQNITIDADYVSKHLDALVADEDLSRFIL</sequence>